<proteinExistence type="inferred from homology"/>
<sequence>MSTLHKVKAYFGMAPMDDYEDEYYDDRAPSRGFPRPRFDDGYGRYDGDDYDDPRREPADYPPPAGYRGGYAEESRYGAVHPREFERPEMGRPRFGSWLRNSTRGALAMDPRRMAMMFEEGHPLSKITTLRPKDYSEARTIGERFRDGTPVIMDLVSMDNADAKRLVDFAAGLAFALRGSFDKVATKVFLLSPADVDVSPEERRRIAETGFYAYQ</sequence>
<evidence type="ECO:0000255" key="1">
    <source>
        <dbReference type="HAMAP-Rule" id="MF_01197"/>
    </source>
</evidence>
<evidence type="ECO:0000256" key="2">
    <source>
        <dbReference type="SAM" id="MobiDB-lite"/>
    </source>
</evidence>
<evidence type="ECO:0000305" key="3"/>
<organism>
    <name type="scientific">Mycobacterium avium (strain 104)</name>
    <dbReference type="NCBI Taxonomy" id="243243"/>
    <lineage>
        <taxon>Bacteria</taxon>
        <taxon>Bacillati</taxon>
        <taxon>Actinomycetota</taxon>
        <taxon>Actinomycetes</taxon>
        <taxon>Mycobacteriales</taxon>
        <taxon>Mycobacteriaceae</taxon>
        <taxon>Mycobacterium</taxon>
        <taxon>Mycobacterium avium complex (MAC)</taxon>
    </lineage>
</organism>
<protein>
    <recommendedName>
        <fullName evidence="1">Cell division protein SepF</fullName>
    </recommendedName>
</protein>
<feature type="chain" id="PRO_0000334037" description="Cell division protein SepF">
    <location>
        <begin position="1"/>
        <end position="214"/>
    </location>
</feature>
<feature type="region of interest" description="Disordered" evidence="2">
    <location>
        <begin position="23"/>
        <end position="70"/>
    </location>
</feature>
<feature type="compositionally biased region" description="Basic and acidic residues" evidence="2">
    <location>
        <begin position="36"/>
        <end position="58"/>
    </location>
</feature>
<dbReference type="EMBL" id="CP000479">
    <property type="protein sequence ID" value="ABK67232.1"/>
    <property type="status" value="ALT_INIT"/>
    <property type="molecule type" value="Genomic_DNA"/>
</dbReference>
<dbReference type="RefSeq" id="WP_003872220.1">
    <property type="nucleotide sequence ID" value="NC_008595.1"/>
</dbReference>
<dbReference type="SMR" id="A0QF59"/>
<dbReference type="KEGG" id="mav:MAV_2343"/>
<dbReference type="HOGENOM" id="CLU_078499_0_0_11"/>
<dbReference type="Proteomes" id="UP000001574">
    <property type="component" value="Chromosome"/>
</dbReference>
<dbReference type="GO" id="GO:0005737">
    <property type="term" value="C:cytoplasm"/>
    <property type="evidence" value="ECO:0007669"/>
    <property type="project" value="UniProtKB-SubCell"/>
</dbReference>
<dbReference type="GO" id="GO:0000917">
    <property type="term" value="P:division septum assembly"/>
    <property type="evidence" value="ECO:0007669"/>
    <property type="project" value="UniProtKB-KW"/>
</dbReference>
<dbReference type="GO" id="GO:0043093">
    <property type="term" value="P:FtsZ-dependent cytokinesis"/>
    <property type="evidence" value="ECO:0007669"/>
    <property type="project" value="UniProtKB-UniRule"/>
</dbReference>
<dbReference type="FunFam" id="3.30.110.150:FF:000001">
    <property type="entry name" value="Cell division protein SepF"/>
    <property type="match status" value="1"/>
</dbReference>
<dbReference type="Gene3D" id="3.30.110.150">
    <property type="entry name" value="SepF-like protein"/>
    <property type="match status" value="1"/>
</dbReference>
<dbReference type="HAMAP" id="MF_01197">
    <property type="entry name" value="SepF"/>
    <property type="match status" value="1"/>
</dbReference>
<dbReference type="InterPro" id="IPR023052">
    <property type="entry name" value="Cell_div_SepF"/>
</dbReference>
<dbReference type="InterPro" id="IPR007561">
    <property type="entry name" value="Cell_div_SepF/SepF-rel"/>
</dbReference>
<dbReference type="InterPro" id="IPR038594">
    <property type="entry name" value="SepF-like_sf"/>
</dbReference>
<dbReference type="PANTHER" id="PTHR35798">
    <property type="entry name" value="CELL DIVISION PROTEIN SEPF"/>
    <property type="match status" value="1"/>
</dbReference>
<dbReference type="PANTHER" id="PTHR35798:SF1">
    <property type="entry name" value="CELL DIVISION PROTEIN SEPF"/>
    <property type="match status" value="1"/>
</dbReference>
<dbReference type="Pfam" id="PF04472">
    <property type="entry name" value="SepF"/>
    <property type="match status" value="1"/>
</dbReference>
<keyword id="KW-0131">Cell cycle</keyword>
<keyword id="KW-0132">Cell division</keyword>
<keyword id="KW-0963">Cytoplasm</keyword>
<keyword id="KW-0717">Septation</keyword>
<name>SEPF_MYCA1</name>
<gene>
    <name evidence="1" type="primary">sepF</name>
    <name type="ordered locus">MAV_2343</name>
</gene>
<comment type="function">
    <text evidence="1">Cell division protein that is part of the divisome complex and is recruited early to the Z-ring. Probably stimulates Z-ring formation, perhaps through the cross-linking of FtsZ protofilaments. Its function overlaps with FtsA.</text>
</comment>
<comment type="subunit">
    <text evidence="1">Homodimer. Interacts with FtsZ.</text>
</comment>
<comment type="subcellular location">
    <subcellularLocation>
        <location evidence="1">Cytoplasm</location>
    </subcellularLocation>
    <text evidence="1">Localizes to the division site, in a FtsZ-dependent manner.</text>
</comment>
<comment type="similarity">
    <text evidence="1">Belongs to the SepF family.</text>
</comment>
<comment type="sequence caution" evidence="3">
    <conflict type="erroneous initiation">
        <sequence resource="EMBL-CDS" id="ABK67232"/>
    </conflict>
</comment>
<reference key="1">
    <citation type="submission" date="2006-10" db="EMBL/GenBank/DDBJ databases">
        <authorList>
            <person name="Fleischmann R.D."/>
            <person name="Dodson R.J."/>
            <person name="Haft D.H."/>
            <person name="Merkel J.S."/>
            <person name="Nelson W.C."/>
            <person name="Fraser C.M."/>
        </authorList>
    </citation>
    <scope>NUCLEOTIDE SEQUENCE [LARGE SCALE GENOMIC DNA]</scope>
    <source>
        <strain>104</strain>
    </source>
</reference>
<accession>A0QF59</accession>